<reference key="1">
    <citation type="journal article" date="2002" name="DNA Res.">
        <title>Complete genomic sequence of nitrogen-fixing symbiotic bacterium Bradyrhizobium japonicum USDA110.</title>
        <authorList>
            <person name="Kaneko T."/>
            <person name="Nakamura Y."/>
            <person name="Sato S."/>
            <person name="Minamisawa K."/>
            <person name="Uchiumi T."/>
            <person name="Sasamoto S."/>
            <person name="Watanabe A."/>
            <person name="Idesawa K."/>
            <person name="Iriguchi M."/>
            <person name="Kawashima K."/>
            <person name="Kohara M."/>
            <person name="Matsumoto M."/>
            <person name="Shimpo S."/>
            <person name="Tsuruoka H."/>
            <person name="Wada T."/>
            <person name="Yamada M."/>
            <person name="Tabata S."/>
        </authorList>
    </citation>
    <scope>NUCLEOTIDE SEQUENCE [LARGE SCALE GENOMIC DNA]</scope>
    <source>
        <strain>JCM 10833 / BCRC 13528 / IAM 13628 / NBRC 14792 / USDA 110</strain>
    </source>
</reference>
<organism>
    <name type="scientific">Bradyrhizobium diazoefficiens (strain JCM 10833 / BCRC 13528 / IAM 13628 / NBRC 14792 / USDA 110)</name>
    <dbReference type="NCBI Taxonomy" id="224911"/>
    <lineage>
        <taxon>Bacteria</taxon>
        <taxon>Pseudomonadati</taxon>
        <taxon>Pseudomonadota</taxon>
        <taxon>Alphaproteobacteria</taxon>
        <taxon>Hyphomicrobiales</taxon>
        <taxon>Nitrobacteraceae</taxon>
        <taxon>Bradyrhizobium</taxon>
    </lineage>
</organism>
<dbReference type="EMBL" id="BA000040">
    <property type="protein sequence ID" value="BAC52598.1"/>
    <property type="molecule type" value="Genomic_DNA"/>
</dbReference>
<dbReference type="RefSeq" id="NP_773973.1">
    <property type="nucleotide sequence ID" value="NC_004463.1"/>
</dbReference>
<dbReference type="RefSeq" id="WP_011090068.1">
    <property type="nucleotide sequence ID" value="NC_004463.1"/>
</dbReference>
<dbReference type="SMR" id="Q89DV4"/>
<dbReference type="EnsemblBacteria" id="BAC52598">
    <property type="protein sequence ID" value="BAC52598"/>
    <property type="gene ID" value="BAC52598"/>
</dbReference>
<dbReference type="GeneID" id="46494292"/>
<dbReference type="KEGG" id="bja:bll7333"/>
<dbReference type="PATRIC" id="fig|224911.44.peg.7412"/>
<dbReference type="eggNOG" id="COG1615">
    <property type="taxonomic scope" value="Bacteria"/>
</dbReference>
<dbReference type="HOGENOM" id="CLU_007733_0_0_5"/>
<dbReference type="InParanoid" id="Q89DV4"/>
<dbReference type="OrthoDB" id="9763654at2"/>
<dbReference type="PhylomeDB" id="Q89DV4"/>
<dbReference type="Proteomes" id="UP000002526">
    <property type="component" value="Chromosome"/>
</dbReference>
<dbReference type="GO" id="GO:0005886">
    <property type="term" value="C:plasma membrane"/>
    <property type="evidence" value="ECO:0007669"/>
    <property type="project" value="UniProtKB-SubCell"/>
</dbReference>
<dbReference type="HAMAP" id="MF_01600">
    <property type="entry name" value="UPF0182"/>
    <property type="match status" value="1"/>
</dbReference>
<dbReference type="InterPro" id="IPR005372">
    <property type="entry name" value="UPF0182"/>
</dbReference>
<dbReference type="PANTHER" id="PTHR39344">
    <property type="entry name" value="UPF0182 PROTEIN SLL1060"/>
    <property type="match status" value="1"/>
</dbReference>
<dbReference type="PANTHER" id="PTHR39344:SF1">
    <property type="entry name" value="UPF0182 PROTEIN SLL1060"/>
    <property type="match status" value="1"/>
</dbReference>
<dbReference type="Pfam" id="PF03699">
    <property type="entry name" value="UPF0182"/>
    <property type="match status" value="1"/>
</dbReference>
<feature type="chain" id="PRO_0000157712" description="UPF0182 protein bll7333">
    <location>
        <begin position="1"/>
        <end position="927"/>
    </location>
</feature>
<feature type="transmembrane region" description="Helical" evidence="1">
    <location>
        <begin position="17"/>
        <end position="37"/>
    </location>
</feature>
<feature type="transmembrane region" description="Helical" evidence="1">
    <location>
        <begin position="65"/>
        <end position="85"/>
    </location>
</feature>
<feature type="transmembrane region" description="Helical" evidence="1">
    <location>
        <begin position="134"/>
        <end position="154"/>
    </location>
</feature>
<feature type="transmembrane region" description="Helical" evidence="1">
    <location>
        <begin position="185"/>
        <end position="205"/>
    </location>
</feature>
<feature type="transmembrane region" description="Helical" evidence="1">
    <location>
        <begin position="220"/>
        <end position="240"/>
    </location>
</feature>
<feature type="transmembrane region" description="Helical" evidence="1">
    <location>
        <begin position="264"/>
        <end position="284"/>
    </location>
</feature>
<feature type="transmembrane region" description="Helical" evidence="1">
    <location>
        <begin position="297"/>
        <end position="317"/>
    </location>
</feature>
<name>Y7333_BRADU</name>
<evidence type="ECO:0000255" key="1">
    <source>
        <dbReference type="HAMAP-Rule" id="MF_01600"/>
    </source>
</evidence>
<protein>
    <recommendedName>
        <fullName evidence="1">UPF0182 protein bll7333</fullName>
    </recommendedName>
</protein>
<sequence length="927" mass="104311">MTIGITGPERKAPRQSAVVGLIIAALVIAIVLTLLALASDFLVDWLWFSVIGYREVFWTTIGAKAVVFLAVWTATAVILLLNGWLALHFARRRSTQLAAASVWSAAGNAPPDLLALVRDRLRWPRLIAAGAASLALLVAAAEAGNWGVFLQFVYQAPYGADDPLYNNDIGFYLFSLPAYILIKNWMMLALALSALFAAAIYLVHGEIEYDIHRRSMSSTVIAHGSALLGLLFAVKAWSFGLDRYLLLYGDNGVVVGASYTDVHVGLPALWLMIGLSGIAALAAWANVRVRTYRLPAAAFLLVAIGSFVLSGLVPVLFRQFFVRPSELELERPYIERNIALTRQAYNLDQIAAKPFAAEQKLSFKTLDANKATIDNIRLWDWQPLADTYAQLQEIRTYYKFHHLDVDRYWLNGSYQSVMISARELRPSLLPPNAQTWVNHHVLFTHGTGAVMSPVTRKSSEGLPFLYLRDIPPVADGGPQIREPRIYYGEEHDSYVIVKGSTPEFDYPKGKDNVYAAYDGTGGVPIGAAVWRGLFAYYFNDPNLLLSSYITADSRIMIRRNIGERVRTIAPFLRLDHDPYLVISNGRMFWMQDAYTVSSYFPSAQPAQDQDLNYIRNSVKVIVDAYNGTVDFYLMDTGDPVAATWRRIFPNLFKPFSVMPADLQRHIRYPEDLFLIQAQLYQSYHMEAADVFYNREDLWQFPRQPGGGGVATMAPYYIIMRLPGESQAEFFLMLPMVPSRRDNMIAWLAARCDAPDYGKLIVYEFPKEKLVYGPFQIEARINQSTEISQQITLWNQMGSRVIRGANLLVIPIENSILYVTPLYLRAEHGHLPELKRVIAAYGEHVVMKETLDEALSALFTEPGAVRPVSSTMEEMPVTRPSASQAREALDRYNQAVERLRSGDWKGFGTQFDAMRELLEDMNRHSADR</sequence>
<accession>Q89DV4</accession>
<comment type="subcellular location">
    <subcellularLocation>
        <location evidence="1">Cell membrane</location>
        <topology evidence="1">Multi-pass membrane protein</topology>
    </subcellularLocation>
</comment>
<comment type="similarity">
    <text evidence="1">Belongs to the UPF0182 family.</text>
</comment>
<proteinExistence type="inferred from homology"/>
<keyword id="KW-1003">Cell membrane</keyword>
<keyword id="KW-0472">Membrane</keyword>
<keyword id="KW-1185">Reference proteome</keyword>
<keyword id="KW-0812">Transmembrane</keyword>
<keyword id="KW-1133">Transmembrane helix</keyword>
<gene>
    <name type="ordered locus">bll7333</name>
</gene>